<feature type="chain" id="PRO_0000211082" description="Segregation and condensation protein A">
    <location>
        <begin position="1"/>
        <end position="248"/>
    </location>
</feature>
<sequence length="248" mass="29442">MEMPIIKLKNFDGPFDLLLHLIKKNEMSITEIKIHEITKQYLEYIALMKELDLEITSEFIVMAATLIEIKSKSLLPKVKVEDETCEEDLQKILMEKLQEYKKFKKISAYLRERELSTGEVFTKKAEIIEVEVDNKLDDDYFKNITMLDLYKLYNNLMRIYGEKQNVNVMEKKISVDKYKITDKINFLRDKLSEKSIVRFSEFIPQCECKLEVVVTFMAMLELIKRSEIKVVQYENFGEIMMEKVIVNE</sequence>
<protein>
    <recommendedName>
        <fullName evidence="1">Segregation and condensation protein A</fullName>
    </recommendedName>
</protein>
<gene>
    <name evidence="1" type="primary">scpA</name>
    <name type="ordered locus">CPE1805</name>
</gene>
<keyword id="KW-0131">Cell cycle</keyword>
<keyword id="KW-0132">Cell division</keyword>
<keyword id="KW-0159">Chromosome partition</keyword>
<keyword id="KW-0963">Cytoplasm</keyword>
<keyword id="KW-1185">Reference proteome</keyword>
<evidence type="ECO:0000255" key="1">
    <source>
        <dbReference type="HAMAP-Rule" id="MF_01805"/>
    </source>
</evidence>
<reference key="1">
    <citation type="journal article" date="2002" name="Proc. Natl. Acad. Sci. U.S.A.">
        <title>Complete genome sequence of Clostridium perfringens, an anaerobic flesh-eater.</title>
        <authorList>
            <person name="Shimizu T."/>
            <person name="Ohtani K."/>
            <person name="Hirakawa H."/>
            <person name="Ohshima K."/>
            <person name="Yamashita A."/>
            <person name="Shiba T."/>
            <person name="Ogasawara N."/>
            <person name="Hattori M."/>
            <person name="Kuhara S."/>
            <person name="Hayashi H."/>
        </authorList>
    </citation>
    <scope>NUCLEOTIDE SEQUENCE [LARGE SCALE GENOMIC DNA]</scope>
    <source>
        <strain>13 / Type A</strain>
    </source>
</reference>
<dbReference type="EMBL" id="BA000016">
    <property type="protein sequence ID" value="BAB81511.1"/>
    <property type="molecule type" value="Genomic_DNA"/>
</dbReference>
<dbReference type="RefSeq" id="WP_003458723.1">
    <property type="nucleotide sequence ID" value="NC_003366.1"/>
</dbReference>
<dbReference type="SMR" id="Q8XJF4"/>
<dbReference type="STRING" id="195102.gene:10491069"/>
<dbReference type="KEGG" id="cpe:CPE1805"/>
<dbReference type="HOGENOM" id="CLU_038686_3_0_9"/>
<dbReference type="Proteomes" id="UP000000818">
    <property type="component" value="Chromosome"/>
</dbReference>
<dbReference type="GO" id="GO:0005737">
    <property type="term" value="C:cytoplasm"/>
    <property type="evidence" value="ECO:0007669"/>
    <property type="project" value="UniProtKB-SubCell"/>
</dbReference>
<dbReference type="GO" id="GO:0051301">
    <property type="term" value="P:cell division"/>
    <property type="evidence" value="ECO:0007669"/>
    <property type="project" value="UniProtKB-KW"/>
</dbReference>
<dbReference type="GO" id="GO:0007059">
    <property type="term" value="P:chromosome segregation"/>
    <property type="evidence" value="ECO:0007669"/>
    <property type="project" value="UniProtKB-UniRule"/>
</dbReference>
<dbReference type="GO" id="GO:0006260">
    <property type="term" value="P:DNA replication"/>
    <property type="evidence" value="ECO:0007669"/>
    <property type="project" value="UniProtKB-UniRule"/>
</dbReference>
<dbReference type="Gene3D" id="6.10.250.2410">
    <property type="match status" value="1"/>
</dbReference>
<dbReference type="Gene3D" id="1.10.10.580">
    <property type="entry name" value="Structural maintenance of chromosome 1. Chain E"/>
    <property type="match status" value="1"/>
</dbReference>
<dbReference type="HAMAP" id="MF_01805">
    <property type="entry name" value="ScpA"/>
    <property type="match status" value="1"/>
</dbReference>
<dbReference type="InterPro" id="IPR003768">
    <property type="entry name" value="ScpA"/>
</dbReference>
<dbReference type="InterPro" id="IPR023093">
    <property type="entry name" value="ScpA-like_C"/>
</dbReference>
<dbReference type="NCBIfam" id="NF000994">
    <property type="entry name" value="PRK00104.1-3"/>
    <property type="match status" value="1"/>
</dbReference>
<dbReference type="PANTHER" id="PTHR33969">
    <property type="entry name" value="SEGREGATION AND CONDENSATION PROTEIN A"/>
    <property type="match status" value="1"/>
</dbReference>
<dbReference type="PANTHER" id="PTHR33969:SF2">
    <property type="entry name" value="SEGREGATION AND CONDENSATION PROTEIN A"/>
    <property type="match status" value="1"/>
</dbReference>
<dbReference type="Pfam" id="PF02616">
    <property type="entry name" value="SMC_ScpA"/>
    <property type="match status" value="1"/>
</dbReference>
<proteinExistence type="inferred from homology"/>
<organism>
    <name type="scientific">Clostridium perfringens (strain 13 / Type A)</name>
    <dbReference type="NCBI Taxonomy" id="195102"/>
    <lineage>
        <taxon>Bacteria</taxon>
        <taxon>Bacillati</taxon>
        <taxon>Bacillota</taxon>
        <taxon>Clostridia</taxon>
        <taxon>Eubacteriales</taxon>
        <taxon>Clostridiaceae</taxon>
        <taxon>Clostridium</taxon>
    </lineage>
</organism>
<name>SCPA_CLOPE</name>
<accession>Q8XJF4</accession>
<comment type="function">
    <text evidence="1">Participates in chromosomal partition during cell division. May act via the formation of a condensin-like complex containing Smc and ScpB that pull DNA away from mid-cell into both cell halves.</text>
</comment>
<comment type="subunit">
    <text evidence="1">Component of a cohesin-like complex composed of ScpA, ScpB and the Smc homodimer, in which ScpA and ScpB bind to the head domain of Smc. The presence of the three proteins is required for the association of the complex with DNA.</text>
</comment>
<comment type="subcellular location">
    <subcellularLocation>
        <location evidence="1">Cytoplasm</location>
    </subcellularLocation>
    <text evidence="1">Associated with two foci at the outer edges of the nucleoid region in young cells, and at four foci within both cell halves in older cells.</text>
</comment>
<comment type="similarity">
    <text evidence="1">Belongs to the ScpA family.</text>
</comment>